<proteinExistence type="inferred from homology"/>
<keyword id="KW-0963">Cytoplasm</keyword>
<keyword id="KW-0489">Methyltransferase</keyword>
<keyword id="KW-1185">Reference proteome</keyword>
<keyword id="KW-0698">rRNA processing</keyword>
<keyword id="KW-0949">S-adenosyl-L-methionine</keyword>
<keyword id="KW-0808">Transferase</keyword>
<protein>
    <recommendedName>
        <fullName evidence="1">Ribosomal RNA small subunit methyltransferase J</fullName>
        <ecNumber evidence="1">2.1.1.242</ecNumber>
    </recommendedName>
    <alternativeName>
        <fullName evidence="1">16S rRNA m2G1516 methyltransferase</fullName>
    </alternativeName>
    <alternativeName>
        <fullName evidence="1">rRNA (guanine-N(2)-)-methyltransferase</fullName>
    </alternativeName>
</protein>
<comment type="function">
    <text evidence="1">Specifically methylates the guanosine in position 1516 of 16S rRNA.</text>
</comment>
<comment type="catalytic activity">
    <reaction evidence="1">
        <text>guanosine(1516) in 16S rRNA + S-adenosyl-L-methionine = N(2)-methylguanosine(1516) in 16S rRNA + S-adenosyl-L-homocysteine + H(+)</text>
        <dbReference type="Rhea" id="RHEA:43220"/>
        <dbReference type="Rhea" id="RHEA-COMP:10412"/>
        <dbReference type="Rhea" id="RHEA-COMP:10413"/>
        <dbReference type="ChEBI" id="CHEBI:15378"/>
        <dbReference type="ChEBI" id="CHEBI:57856"/>
        <dbReference type="ChEBI" id="CHEBI:59789"/>
        <dbReference type="ChEBI" id="CHEBI:74269"/>
        <dbReference type="ChEBI" id="CHEBI:74481"/>
        <dbReference type="EC" id="2.1.1.242"/>
    </reaction>
</comment>
<comment type="subcellular location">
    <subcellularLocation>
        <location evidence="1">Cytoplasm</location>
    </subcellularLocation>
</comment>
<comment type="similarity">
    <text evidence="1">Belongs to the methyltransferase superfamily. RsmJ family.</text>
</comment>
<evidence type="ECO:0000255" key="1">
    <source>
        <dbReference type="HAMAP-Rule" id="MF_01523"/>
    </source>
</evidence>
<accession>Q21HF7</accession>
<reference key="1">
    <citation type="journal article" date="2008" name="PLoS Genet.">
        <title>Complete genome sequence of the complex carbohydrate-degrading marine bacterium, Saccharophagus degradans strain 2-40 T.</title>
        <authorList>
            <person name="Weiner R.M."/>
            <person name="Taylor L.E. II"/>
            <person name="Henrissat B."/>
            <person name="Hauser L."/>
            <person name="Land M."/>
            <person name="Coutinho P.M."/>
            <person name="Rancurel C."/>
            <person name="Saunders E.H."/>
            <person name="Longmire A.G."/>
            <person name="Zhang H."/>
            <person name="Bayer E.A."/>
            <person name="Gilbert H.J."/>
            <person name="Larimer F."/>
            <person name="Zhulin I.B."/>
            <person name="Ekborg N.A."/>
            <person name="Lamed R."/>
            <person name="Richardson P.M."/>
            <person name="Borovok I."/>
            <person name="Hutcheson S."/>
        </authorList>
    </citation>
    <scope>NUCLEOTIDE SEQUENCE [LARGE SCALE GENOMIC DNA]</scope>
    <source>
        <strain>2-40 / ATCC 43961 / DSM 17024</strain>
    </source>
</reference>
<feature type="chain" id="PRO_0000244282" description="Ribosomal RNA small subunit methyltransferase J">
    <location>
        <begin position="1"/>
        <end position="269"/>
    </location>
</feature>
<feature type="binding site" evidence="1">
    <location>
        <begin position="124"/>
        <end position="125"/>
    </location>
    <ligand>
        <name>S-adenosyl-L-methionine</name>
        <dbReference type="ChEBI" id="CHEBI:59789"/>
    </ligand>
</feature>
<feature type="binding site" evidence="1">
    <location>
        <position position="188"/>
    </location>
    <ligand>
        <name>S-adenosyl-L-methionine</name>
        <dbReference type="ChEBI" id="CHEBI:59789"/>
    </ligand>
</feature>
<sequence length="269" mass="29703">MKSGFVVRSTISSWESAERFCRQFSLPLLDMQAKHNQEVFQLIFDHQNVHLLDCRAKKPLTLMVDFVTGSRDHRRKFGGGAGQAVAKAVGVKGNRTLHVLDATAGLGGDAFVLACLGSRVTMIERSPVAYALLADGLKRGLLQAEEAGDDELLAILQRMTLVPNDGSDWMRDQLASSDSEQPDVVYLDPMFPEKSKKALAKKEMQIFQEVVGGDEDADKLFEPAFALAKYRVVVKRPKIAPLLNGQEPSVQLVGKSSRFDVYAKKKLPE</sequence>
<name>RSMJ_SACD2</name>
<organism>
    <name type="scientific">Saccharophagus degradans (strain 2-40 / ATCC 43961 / DSM 17024)</name>
    <dbReference type="NCBI Taxonomy" id="203122"/>
    <lineage>
        <taxon>Bacteria</taxon>
        <taxon>Pseudomonadati</taxon>
        <taxon>Pseudomonadota</taxon>
        <taxon>Gammaproteobacteria</taxon>
        <taxon>Cellvibrionales</taxon>
        <taxon>Cellvibrionaceae</taxon>
        <taxon>Saccharophagus</taxon>
    </lineage>
</organism>
<dbReference type="EC" id="2.1.1.242" evidence="1"/>
<dbReference type="EMBL" id="CP000282">
    <property type="protein sequence ID" value="ABD81872.1"/>
    <property type="molecule type" value="Genomic_DNA"/>
</dbReference>
<dbReference type="RefSeq" id="WP_011469089.1">
    <property type="nucleotide sequence ID" value="NC_007912.1"/>
</dbReference>
<dbReference type="SMR" id="Q21HF7"/>
<dbReference type="STRING" id="203122.Sde_2612"/>
<dbReference type="GeneID" id="98614274"/>
<dbReference type="KEGG" id="sde:Sde_2612"/>
<dbReference type="eggNOG" id="COG0742">
    <property type="taxonomic scope" value="Bacteria"/>
</dbReference>
<dbReference type="HOGENOM" id="CLU_076324_0_1_6"/>
<dbReference type="OrthoDB" id="3191794at2"/>
<dbReference type="Proteomes" id="UP000001947">
    <property type="component" value="Chromosome"/>
</dbReference>
<dbReference type="GO" id="GO:0005737">
    <property type="term" value="C:cytoplasm"/>
    <property type="evidence" value="ECO:0007669"/>
    <property type="project" value="UniProtKB-SubCell"/>
</dbReference>
<dbReference type="GO" id="GO:0008990">
    <property type="term" value="F:rRNA (guanine-N2-)-methyltransferase activity"/>
    <property type="evidence" value="ECO:0007669"/>
    <property type="project" value="UniProtKB-UniRule"/>
</dbReference>
<dbReference type="CDD" id="cd02440">
    <property type="entry name" value="AdoMet_MTases"/>
    <property type="match status" value="1"/>
</dbReference>
<dbReference type="Gene3D" id="3.40.50.150">
    <property type="entry name" value="Vaccinia Virus protein VP39"/>
    <property type="match status" value="1"/>
</dbReference>
<dbReference type="HAMAP" id="MF_01523">
    <property type="entry name" value="16SrRNA_methyltr_J"/>
    <property type="match status" value="1"/>
</dbReference>
<dbReference type="InterPro" id="IPR007536">
    <property type="entry name" value="16SrRNA_methylTrfase_J"/>
</dbReference>
<dbReference type="InterPro" id="IPR029063">
    <property type="entry name" value="SAM-dependent_MTases_sf"/>
</dbReference>
<dbReference type="PANTHER" id="PTHR36112">
    <property type="entry name" value="RIBOSOMAL RNA SMALL SUBUNIT METHYLTRANSFERASE J"/>
    <property type="match status" value="1"/>
</dbReference>
<dbReference type="PANTHER" id="PTHR36112:SF1">
    <property type="entry name" value="RIBOSOMAL RNA SMALL SUBUNIT METHYLTRANSFERASE J"/>
    <property type="match status" value="1"/>
</dbReference>
<dbReference type="Pfam" id="PF04445">
    <property type="entry name" value="SAM_MT"/>
    <property type="match status" value="1"/>
</dbReference>
<dbReference type="SUPFAM" id="SSF53335">
    <property type="entry name" value="S-adenosyl-L-methionine-dependent methyltransferases"/>
    <property type="match status" value="1"/>
</dbReference>
<gene>
    <name evidence="1" type="primary">rsmJ</name>
    <name type="ordered locus">Sde_2612</name>
</gene>